<sequence length="202" mass="23132">MNVLRKIVKKCRDEDTQKPSPVSAPPYDDDLWLPPPEYVPLKELTSKKNMRNFCVNGEVKACSPNGYSFRILRHILGSFNEIYSGNHRMIGLVKVVVGLALSGAPVPEGMNWVYKLRRTLIFQWADSRGPLEGEELEYSQEITWDDDTEFVGLQIRVGARQCHIQGRIWCINSNSRACQLWSDMSLQTQRSEEDKDSSLLLE</sequence>
<comment type="function">
    <text evidence="2 3">Plays a major role in assembly, budding and uncoating of virion after membrane fusion. Completely covers the ribonucleoprotein coil and keep it in condensed bullet-shaped form. Inhibits viral transcription and stimulates replication. Plays a major role in early induction of TRAIL-mediated apoptosis in infected neurons (By similarity). Inhibits the integrated stress response (ISR) in the infected cell by blocking the formation of stress granules (By similarity).</text>
</comment>
<comment type="subunit">
    <text evidence="2">Homomultimer. Interacts with nucleoprotein and with the cytoplasmic domain of glycoprotein. Interacts with host ATP6V1A; this interaction plays an important role in virion uncoating after viral entry.</text>
</comment>
<comment type="subcellular location">
    <subcellularLocation>
        <location evidence="2">Virion membrane</location>
        <topology evidence="2">Peripheral membrane protein</topology>
    </subcellularLocation>
    <subcellularLocation>
        <location evidence="2">Host endomembrane system</location>
        <topology evidence="2">Peripheral membrane protein</topology>
    </subcellularLocation>
    <subcellularLocation>
        <location evidence="2">Host cytoplasm</location>
    </subcellularLocation>
</comment>
<comment type="domain">
    <text evidence="5">Late-budding domains (L domains) are short sequence motifs essential for viral particle budding. They recruit proteins of the host ESCRT machinery (Endosomal Sorting Complex Required for Transport) or ESCRT-associated proteins. Matrix protein contains one L domain: a PPXY motif which potentially interacts with the WW domain 3 of NEDD4 E3 ubiquitin ligase (Potential).</text>
</comment>
<comment type="miscellaneous">
    <text evidence="1">Most abundant protein in the virion.</text>
</comment>
<comment type="similarity">
    <text evidence="5">Belongs to the lyssavirus matrix protein family.</text>
</comment>
<name>MATRX_RABVC</name>
<reference key="1">
    <citation type="journal article" date="1993" name="Virus Genes">
        <title>Comparative sequence analysis of the M gene among rabies virus strains and its expression by recombinant vaccinia virus.</title>
        <authorList>
            <person name="Hiramatsu K."/>
            <person name="Mannen K."/>
            <person name="Mifune K."/>
            <person name="Nishizono A."/>
            <person name="Takita-Sonoda Y."/>
        </authorList>
    </citation>
    <scope>NUCLEOTIDE SEQUENCE [GENOMIC RNA]</scope>
</reference>
<dbReference type="EMBL" id="D10499">
    <property type="protein sequence ID" value="BAA01386.1"/>
    <property type="molecule type" value="Genomic_RNA"/>
</dbReference>
<dbReference type="PIR" id="JQ1112">
    <property type="entry name" value="MFVNCV"/>
</dbReference>
<dbReference type="SMR" id="P25223"/>
<dbReference type="GO" id="GO:0030430">
    <property type="term" value="C:host cell cytoplasm"/>
    <property type="evidence" value="ECO:0007669"/>
    <property type="project" value="UniProtKB-SubCell"/>
</dbReference>
<dbReference type="GO" id="GO:0033645">
    <property type="term" value="C:host cell endomembrane system"/>
    <property type="evidence" value="ECO:0007669"/>
    <property type="project" value="UniProtKB-SubCell"/>
</dbReference>
<dbReference type="GO" id="GO:0016020">
    <property type="term" value="C:membrane"/>
    <property type="evidence" value="ECO:0007669"/>
    <property type="project" value="UniProtKB-KW"/>
</dbReference>
<dbReference type="GO" id="GO:0019031">
    <property type="term" value="C:viral envelope"/>
    <property type="evidence" value="ECO:0007669"/>
    <property type="project" value="UniProtKB-KW"/>
</dbReference>
<dbReference type="GO" id="GO:0055036">
    <property type="term" value="C:virion membrane"/>
    <property type="evidence" value="ECO:0007669"/>
    <property type="project" value="UniProtKB-SubCell"/>
</dbReference>
<dbReference type="GO" id="GO:0039660">
    <property type="term" value="F:structural constituent of virion"/>
    <property type="evidence" value="ECO:0007669"/>
    <property type="project" value="UniProtKB-KW"/>
</dbReference>
<dbReference type="GO" id="GO:0039702">
    <property type="term" value="P:viral budding via host ESCRT complex"/>
    <property type="evidence" value="ECO:0007669"/>
    <property type="project" value="UniProtKB-KW"/>
</dbReference>
<dbReference type="FunFam" id="3.10.460.20:FF:000001">
    <property type="entry name" value="Matrix protein"/>
    <property type="match status" value="1"/>
</dbReference>
<dbReference type="Gene3D" id="3.10.460.20">
    <property type="entry name" value="Rhabdovirus matrix protein M2"/>
    <property type="match status" value="1"/>
</dbReference>
<dbReference type="InterPro" id="IPR006870">
    <property type="entry name" value="Rhabdo_M"/>
</dbReference>
<dbReference type="InterPro" id="IPR038617">
    <property type="entry name" value="Rhabdovirus_M_sf"/>
</dbReference>
<dbReference type="Pfam" id="PF04785">
    <property type="entry name" value="Rhabdo_M2"/>
    <property type="match status" value="1"/>
</dbReference>
<keyword id="KW-1035">Host cytoplasm</keyword>
<keyword id="KW-1043">Host membrane</keyword>
<keyword id="KW-0945">Host-virus interaction</keyword>
<keyword id="KW-0472">Membrane</keyword>
<keyword id="KW-0597">Phosphoprotein</keyword>
<keyword id="KW-1198">Viral budding</keyword>
<keyword id="KW-1187">Viral budding via the host ESCRT complexes</keyword>
<keyword id="KW-0261">Viral envelope protein</keyword>
<keyword id="KW-0468">Viral matrix protein</keyword>
<keyword id="KW-1188">Viral release from host cell</keyword>
<keyword id="KW-0946">Virion</keyword>
<protein>
    <recommendedName>
        <fullName>Matrix protein</fullName>
    </recommendedName>
    <alternativeName>
        <fullName>Phosphoprotein M2</fullName>
    </alternativeName>
</protein>
<proteinExistence type="inferred from homology"/>
<evidence type="ECO:0000250" key="1"/>
<evidence type="ECO:0000250" key="2">
    <source>
        <dbReference type="UniProtKB" id="P16287"/>
    </source>
</evidence>
<evidence type="ECO:0000250" key="3">
    <source>
        <dbReference type="UniProtKB" id="P25224"/>
    </source>
</evidence>
<evidence type="ECO:0000255" key="4"/>
<evidence type="ECO:0000305" key="5"/>
<accession>P25223</accession>
<gene>
    <name type="primary">M</name>
</gene>
<organism>
    <name type="scientific">Rabies virus (strain CVS-11)</name>
    <name type="common">RABV</name>
    <dbReference type="NCBI Taxonomy" id="11294"/>
    <lineage>
        <taxon>Viruses</taxon>
        <taxon>Riboviria</taxon>
        <taxon>Orthornavirae</taxon>
        <taxon>Negarnaviricota</taxon>
        <taxon>Haploviricotina</taxon>
        <taxon>Monjiviricetes</taxon>
        <taxon>Mononegavirales</taxon>
        <taxon>Rhabdoviridae</taxon>
        <taxon>Alpharhabdovirinae</taxon>
        <taxon>Lyssavirus</taxon>
        <taxon>Lyssavirus rabies</taxon>
    </lineage>
</organism>
<organismHost>
    <name type="scientific">Homo sapiens</name>
    <name type="common">Human</name>
    <dbReference type="NCBI Taxonomy" id="9606"/>
</organismHost>
<organismHost>
    <name type="scientific">Mammalia</name>
    <dbReference type="NCBI Taxonomy" id="40674"/>
</organismHost>
<feature type="chain" id="PRO_0000222847" description="Matrix protein">
    <location>
        <begin position="1"/>
        <end position="202"/>
    </location>
</feature>
<feature type="region of interest" description="Essential for glycoprotein binding" evidence="1">
    <location>
        <begin position="115"/>
        <end position="151"/>
    </location>
</feature>
<feature type="short sequence motif" description="PPXY motif" evidence="4">
    <location>
        <begin position="35"/>
        <end position="38"/>
    </location>
</feature>
<feature type="site" description="Involved in the inhibition of stress granules formation and contributes therefore to virulence" evidence="3">
    <location>
        <position position="95"/>
    </location>
</feature>